<dbReference type="EMBL" id="AE017349">
    <property type="protein sequence ID" value="AAW45670.1"/>
    <property type="molecule type" value="Genomic_DNA"/>
</dbReference>
<dbReference type="RefSeq" id="XP_572977.1">
    <property type="nucleotide sequence ID" value="XM_572977.1"/>
</dbReference>
<dbReference type="SMR" id="P0CN62"/>
<dbReference type="FunCoup" id="P0CN62">
    <property type="interactions" value="24"/>
</dbReference>
<dbReference type="STRING" id="214684.P0CN62"/>
<dbReference type="PaxDb" id="214684-P0CN62"/>
<dbReference type="EnsemblFungi" id="AAW45670">
    <property type="protein sequence ID" value="AAW45670"/>
    <property type="gene ID" value="CNI02110"/>
</dbReference>
<dbReference type="GeneID" id="3259505"/>
<dbReference type="KEGG" id="cne:CNI02110"/>
<dbReference type="VEuPathDB" id="FungiDB:CNI02110"/>
<dbReference type="eggNOG" id="KOG2215">
    <property type="taxonomic scope" value="Eukaryota"/>
</dbReference>
<dbReference type="HOGENOM" id="CLU_012488_1_1_1"/>
<dbReference type="InParanoid" id="P0CN62"/>
<dbReference type="OrthoDB" id="642193at2759"/>
<dbReference type="Proteomes" id="UP000002149">
    <property type="component" value="Chromosome 9"/>
</dbReference>
<dbReference type="GO" id="GO:0000145">
    <property type="term" value="C:exocyst"/>
    <property type="evidence" value="ECO:0000318"/>
    <property type="project" value="GO_Central"/>
</dbReference>
<dbReference type="GO" id="GO:0030133">
    <property type="term" value="C:transport vesicle"/>
    <property type="evidence" value="ECO:0007669"/>
    <property type="project" value="UniProtKB-SubCell"/>
</dbReference>
<dbReference type="GO" id="GO:0006887">
    <property type="term" value="P:exocytosis"/>
    <property type="evidence" value="ECO:0007669"/>
    <property type="project" value="UniProtKB-KW"/>
</dbReference>
<dbReference type="GO" id="GO:0006893">
    <property type="term" value="P:Golgi to plasma membrane transport"/>
    <property type="evidence" value="ECO:0000318"/>
    <property type="project" value="GO_Central"/>
</dbReference>
<dbReference type="GO" id="GO:0008104">
    <property type="term" value="P:protein localization"/>
    <property type="evidence" value="ECO:0000318"/>
    <property type="project" value="GO_Central"/>
</dbReference>
<dbReference type="GO" id="GO:0015031">
    <property type="term" value="P:protein transport"/>
    <property type="evidence" value="ECO:0007669"/>
    <property type="project" value="UniProtKB-KW"/>
</dbReference>
<dbReference type="CDD" id="cd01226">
    <property type="entry name" value="PH_RalBD_exo84"/>
    <property type="match status" value="1"/>
</dbReference>
<dbReference type="FunFam" id="1.20.58.1220:FF:000006">
    <property type="entry name" value="Exocyst complex component EXO84, variant"/>
    <property type="match status" value="1"/>
</dbReference>
<dbReference type="FunFam" id="2.30.29.30:FF:000264">
    <property type="entry name" value="Potential exocyst complex component Exo84"/>
    <property type="match status" value="1"/>
</dbReference>
<dbReference type="Gene3D" id="1.20.58.1220">
    <property type="entry name" value="Exo84p, C-terminal helical domain"/>
    <property type="match status" value="1"/>
</dbReference>
<dbReference type="Gene3D" id="1.20.58.1210">
    <property type="entry name" value="Exo84p, N-terminal helical domain"/>
    <property type="match status" value="1"/>
</dbReference>
<dbReference type="Gene3D" id="2.30.29.30">
    <property type="entry name" value="Pleckstrin-homology domain (PH domain)/Phosphotyrosine-binding domain (PTB)"/>
    <property type="match status" value="1"/>
</dbReference>
<dbReference type="InterPro" id="IPR016159">
    <property type="entry name" value="Cullin_repeat-like_dom_sf"/>
</dbReference>
<dbReference type="InterPro" id="IPR033961">
    <property type="entry name" value="Exo84"/>
</dbReference>
<dbReference type="InterPro" id="IPR032403">
    <property type="entry name" value="Exo84_C"/>
</dbReference>
<dbReference type="InterPro" id="IPR042561">
    <property type="entry name" value="Exo84_C_1"/>
</dbReference>
<dbReference type="InterPro" id="IPR042560">
    <property type="entry name" value="Exo84_C_2"/>
</dbReference>
<dbReference type="InterPro" id="IPR011993">
    <property type="entry name" value="PH-like_dom_sf"/>
</dbReference>
<dbReference type="PANTHER" id="PTHR21426">
    <property type="entry name" value="EXOCYST COMPLEX COMPONENT 8"/>
    <property type="match status" value="1"/>
</dbReference>
<dbReference type="PANTHER" id="PTHR21426:SF12">
    <property type="entry name" value="EXOCYST COMPLEX COMPONENT 8"/>
    <property type="match status" value="1"/>
</dbReference>
<dbReference type="Pfam" id="PF16528">
    <property type="entry name" value="Exo84_C"/>
    <property type="match status" value="1"/>
</dbReference>
<dbReference type="Pfam" id="PF25345">
    <property type="entry name" value="PH_EXO84"/>
    <property type="match status" value="1"/>
</dbReference>
<dbReference type="Pfam" id="PF08700">
    <property type="entry name" value="VPS51_Exo84_N"/>
    <property type="match status" value="1"/>
</dbReference>
<dbReference type="SUPFAM" id="SSF74788">
    <property type="entry name" value="Cullin repeat-like"/>
    <property type="match status" value="1"/>
</dbReference>
<dbReference type="SUPFAM" id="SSF50729">
    <property type="entry name" value="PH domain-like"/>
    <property type="match status" value="1"/>
</dbReference>
<keyword id="KW-0175">Coiled coil</keyword>
<keyword id="KW-0968">Cytoplasmic vesicle</keyword>
<keyword id="KW-0268">Exocytosis</keyword>
<keyword id="KW-0653">Protein transport</keyword>
<keyword id="KW-1185">Reference proteome</keyword>
<keyword id="KW-0813">Transport</keyword>
<sequence>MASLRRPSTAIPRGPASVQFDRGARPPLPNDNKQKRMSKVGEKIKKRLSMRYGGNESFSVPPPLPGASDFLTADPYGGLDIETPGEDLAASPFGLYGASDLKESSIQSSQPLDTQEHLVDESIGRRGAADATLEEEWNLEELSNEKVDAQAYVKKVLTGADEEEKRRFVAALMREKQANKKELQRTVFKHYAEFVAISKEISTLENDMLELKELLGQWKDLPQLMGMEDTLAPTLDRNGNLERRRTQRKSVFDLQNLYRNQLTQLWSIVEGSQKYLPVVAGRHLVFELHGVVELNPATYKPKQNVSIFLLNDVLLIAGKRRNKGGSTTSVGDEKDRDRGRMVAERCWNLIELGIVDVKDGGELVNVIKVHRGKEHCVYRTQKSDDKRALINAFRQISREANEKKRKDSEKEQERRKTMWLGDKNGNGTGNSGHPLSTIGPSMADSKDLRWIDEYGDELTMAIAIRDWEESVKLVEKGQALSKSIESNSSAHSLLVSRLEQLVPSLVSQISHDLSSSNLRKSSSARLISLLVRLDLADHARDSFLESRRELMFKRVRSIKCDGDVSIYINELAVVIFTIIRHTSDWYMNAFKENNMASGFVTWAKQQIETFADLFRRQMDAPNISESTVNECLHVTATQNRKLLRDVGLDFTFLLSSLLQPSSNPSDYPHSVFTSV</sequence>
<organism>
    <name type="scientific">Cryptococcus neoformans var. neoformans serotype D (strain JEC21 / ATCC MYA-565)</name>
    <name type="common">Filobasidiella neoformans</name>
    <dbReference type="NCBI Taxonomy" id="214684"/>
    <lineage>
        <taxon>Eukaryota</taxon>
        <taxon>Fungi</taxon>
        <taxon>Dikarya</taxon>
        <taxon>Basidiomycota</taxon>
        <taxon>Agaricomycotina</taxon>
        <taxon>Tremellomycetes</taxon>
        <taxon>Tremellales</taxon>
        <taxon>Cryptococcaceae</taxon>
        <taxon>Cryptococcus</taxon>
        <taxon>Cryptococcus neoformans species complex</taxon>
    </lineage>
</organism>
<protein>
    <recommendedName>
        <fullName>Exocyst complex component EXO84</fullName>
    </recommendedName>
</protein>
<feature type="chain" id="PRO_0000118980" description="Exocyst complex component EXO84">
    <location>
        <begin position="1"/>
        <end position="675"/>
    </location>
</feature>
<feature type="region of interest" description="Disordered" evidence="3">
    <location>
        <begin position="1"/>
        <end position="40"/>
    </location>
</feature>
<feature type="region of interest" description="Disordered" evidence="3">
    <location>
        <begin position="399"/>
        <end position="439"/>
    </location>
</feature>
<feature type="coiled-coil region" evidence="2">
    <location>
        <begin position="134"/>
        <end position="221"/>
    </location>
</feature>
<feature type="compositionally biased region" description="Basic and acidic residues" evidence="3">
    <location>
        <begin position="399"/>
        <end position="416"/>
    </location>
</feature>
<accession>P0CN62</accession>
<accession>Q55N86</accession>
<accession>Q55N87</accession>
<accession>Q5KBL6</accession>
<accession>Q5KBL7</accession>
<accession>Q5KBL8</accession>
<comment type="function">
    <text evidence="1">Involved in the secretory pathway as part of the exocyst complex which tethers secretory vesicles to the sites of exocytosis. Plays a role in both the assembly of the exocyst and the polarization of this complex to specific sites of the plasma membrane for exocytosis. Also involved in assembly of the spliceosome (By similarity).</text>
</comment>
<comment type="subunit">
    <text evidence="1">Component of the exocyst complex.</text>
</comment>
<comment type="subcellular location">
    <subcellularLocation>
        <location evidence="1">Cytoplasmic vesicle</location>
        <location evidence="1">Secretory vesicle</location>
    </subcellularLocation>
    <text evidence="1">Cell periphery. The polarization of EXO84 requires actin cables (By similarity).</text>
</comment>
<comment type="similarity">
    <text evidence="4">Belongs to the EXO84 family.</text>
</comment>
<reference key="1">
    <citation type="journal article" date="2005" name="Science">
        <title>The genome of the basidiomycetous yeast and human pathogen Cryptococcus neoformans.</title>
        <authorList>
            <person name="Loftus B.J."/>
            <person name="Fung E."/>
            <person name="Roncaglia P."/>
            <person name="Rowley D."/>
            <person name="Amedeo P."/>
            <person name="Bruno D."/>
            <person name="Vamathevan J."/>
            <person name="Miranda M."/>
            <person name="Anderson I.J."/>
            <person name="Fraser J.A."/>
            <person name="Allen J.E."/>
            <person name="Bosdet I.E."/>
            <person name="Brent M.R."/>
            <person name="Chiu R."/>
            <person name="Doering T.L."/>
            <person name="Donlin M.J."/>
            <person name="D'Souza C.A."/>
            <person name="Fox D.S."/>
            <person name="Grinberg V."/>
            <person name="Fu J."/>
            <person name="Fukushima M."/>
            <person name="Haas B.J."/>
            <person name="Huang J.C."/>
            <person name="Janbon G."/>
            <person name="Jones S.J.M."/>
            <person name="Koo H.L."/>
            <person name="Krzywinski M.I."/>
            <person name="Kwon-Chung K.J."/>
            <person name="Lengeler K.B."/>
            <person name="Maiti R."/>
            <person name="Marra M.A."/>
            <person name="Marra R.E."/>
            <person name="Mathewson C.A."/>
            <person name="Mitchell T.G."/>
            <person name="Pertea M."/>
            <person name="Riggs F.R."/>
            <person name="Salzberg S.L."/>
            <person name="Schein J.E."/>
            <person name="Shvartsbeyn A."/>
            <person name="Shin H."/>
            <person name="Shumway M."/>
            <person name="Specht C.A."/>
            <person name="Suh B.B."/>
            <person name="Tenney A."/>
            <person name="Utterback T.R."/>
            <person name="Wickes B.L."/>
            <person name="Wortman J.R."/>
            <person name="Wye N.H."/>
            <person name="Kronstad J.W."/>
            <person name="Lodge J.K."/>
            <person name="Heitman J."/>
            <person name="Davis R.W."/>
            <person name="Fraser C.M."/>
            <person name="Hyman R.W."/>
        </authorList>
    </citation>
    <scope>NUCLEOTIDE SEQUENCE [LARGE SCALE GENOMIC DNA]</scope>
    <source>
        <strain>JEC21 / ATCC MYA-565</strain>
    </source>
</reference>
<name>EXO84_CRYNJ</name>
<evidence type="ECO:0000250" key="1"/>
<evidence type="ECO:0000255" key="2"/>
<evidence type="ECO:0000256" key="3">
    <source>
        <dbReference type="SAM" id="MobiDB-lite"/>
    </source>
</evidence>
<evidence type="ECO:0000305" key="4"/>
<gene>
    <name type="primary">EXO84</name>
    <name type="ordered locus">CNI02110</name>
</gene>
<proteinExistence type="inferred from homology"/>